<organism>
    <name type="scientific">Chlorobaculum parvum (strain DSM 263 / NCIMB 8327)</name>
    <name type="common">Chlorobium vibrioforme subsp. thiosulfatophilum</name>
    <dbReference type="NCBI Taxonomy" id="517417"/>
    <lineage>
        <taxon>Bacteria</taxon>
        <taxon>Pseudomonadati</taxon>
        <taxon>Chlorobiota</taxon>
        <taxon>Chlorobiia</taxon>
        <taxon>Chlorobiales</taxon>
        <taxon>Chlorobiaceae</taxon>
        <taxon>Chlorobaculum</taxon>
    </lineage>
</organism>
<proteinExistence type="inferred from homology"/>
<feature type="chain" id="PRO_1000144239" description="Large ribosomal subunit protein uL14">
    <location>
        <begin position="1"/>
        <end position="122"/>
    </location>
</feature>
<reference key="1">
    <citation type="submission" date="2008-06" db="EMBL/GenBank/DDBJ databases">
        <title>Complete sequence of Chlorobaculum parvum NCIB 8327.</title>
        <authorList>
            <consortium name="US DOE Joint Genome Institute"/>
            <person name="Lucas S."/>
            <person name="Copeland A."/>
            <person name="Lapidus A."/>
            <person name="Glavina del Rio T."/>
            <person name="Dalin E."/>
            <person name="Tice H."/>
            <person name="Bruce D."/>
            <person name="Goodwin L."/>
            <person name="Pitluck S."/>
            <person name="Schmutz J."/>
            <person name="Larimer F."/>
            <person name="Land M."/>
            <person name="Hauser L."/>
            <person name="Kyrpides N."/>
            <person name="Mikhailova N."/>
            <person name="Zhao F."/>
            <person name="Li T."/>
            <person name="Liu Z."/>
            <person name="Overmann J."/>
            <person name="Bryant D.A."/>
            <person name="Richardson P."/>
        </authorList>
    </citation>
    <scope>NUCLEOTIDE SEQUENCE [LARGE SCALE GENOMIC DNA]</scope>
    <source>
        <strain>DSM 263 / NCIMB 8327</strain>
    </source>
</reference>
<accession>B3QR72</accession>
<name>RL14_CHLP8</name>
<comment type="function">
    <text evidence="1">Binds to 23S rRNA. Forms part of two intersubunit bridges in the 70S ribosome.</text>
</comment>
<comment type="subunit">
    <text evidence="1">Part of the 50S ribosomal subunit. Forms a cluster with proteins L3 and L19. In the 70S ribosome, L14 and L19 interact and together make contacts with the 16S rRNA in bridges B5 and B8.</text>
</comment>
<comment type="similarity">
    <text evidence="1">Belongs to the universal ribosomal protein uL14 family.</text>
</comment>
<dbReference type="EMBL" id="CP001099">
    <property type="protein sequence ID" value="ACF10614.1"/>
    <property type="molecule type" value="Genomic_DNA"/>
</dbReference>
<dbReference type="RefSeq" id="WP_012501449.1">
    <property type="nucleotide sequence ID" value="NC_011027.1"/>
</dbReference>
<dbReference type="SMR" id="B3QR72"/>
<dbReference type="STRING" id="517417.Cpar_0187"/>
<dbReference type="KEGG" id="cpc:Cpar_0187"/>
<dbReference type="eggNOG" id="COG0093">
    <property type="taxonomic scope" value="Bacteria"/>
</dbReference>
<dbReference type="HOGENOM" id="CLU_095071_2_1_10"/>
<dbReference type="OrthoDB" id="9806379at2"/>
<dbReference type="Proteomes" id="UP000008811">
    <property type="component" value="Chromosome"/>
</dbReference>
<dbReference type="GO" id="GO:0022625">
    <property type="term" value="C:cytosolic large ribosomal subunit"/>
    <property type="evidence" value="ECO:0007669"/>
    <property type="project" value="TreeGrafter"/>
</dbReference>
<dbReference type="GO" id="GO:0070180">
    <property type="term" value="F:large ribosomal subunit rRNA binding"/>
    <property type="evidence" value="ECO:0007669"/>
    <property type="project" value="TreeGrafter"/>
</dbReference>
<dbReference type="GO" id="GO:0003735">
    <property type="term" value="F:structural constituent of ribosome"/>
    <property type="evidence" value="ECO:0007669"/>
    <property type="project" value="InterPro"/>
</dbReference>
<dbReference type="GO" id="GO:0006412">
    <property type="term" value="P:translation"/>
    <property type="evidence" value="ECO:0007669"/>
    <property type="project" value="UniProtKB-UniRule"/>
</dbReference>
<dbReference type="CDD" id="cd00337">
    <property type="entry name" value="Ribosomal_uL14"/>
    <property type="match status" value="1"/>
</dbReference>
<dbReference type="FunFam" id="2.40.150.20:FF:000001">
    <property type="entry name" value="50S ribosomal protein L14"/>
    <property type="match status" value="1"/>
</dbReference>
<dbReference type="Gene3D" id="2.40.150.20">
    <property type="entry name" value="Ribosomal protein L14"/>
    <property type="match status" value="1"/>
</dbReference>
<dbReference type="HAMAP" id="MF_01367">
    <property type="entry name" value="Ribosomal_uL14"/>
    <property type="match status" value="1"/>
</dbReference>
<dbReference type="InterPro" id="IPR000218">
    <property type="entry name" value="Ribosomal_uL14"/>
</dbReference>
<dbReference type="InterPro" id="IPR005745">
    <property type="entry name" value="Ribosomal_uL14_bac-type"/>
</dbReference>
<dbReference type="InterPro" id="IPR019972">
    <property type="entry name" value="Ribosomal_uL14_CS"/>
</dbReference>
<dbReference type="InterPro" id="IPR036853">
    <property type="entry name" value="Ribosomal_uL14_sf"/>
</dbReference>
<dbReference type="NCBIfam" id="TIGR01067">
    <property type="entry name" value="rplN_bact"/>
    <property type="match status" value="1"/>
</dbReference>
<dbReference type="PANTHER" id="PTHR11761">
    <property type="entry name" value="50S/60S RIBOSOMAL PROTEIN L14/L23"/>
    <property type="match status" value="1"/>
</dbReference>
<dbReference type="PANTHER" id="PTHR11761:SF3">
    <property type="entry name" value="LARGE RIBOSOMAL SUBUNIT PROTEIN UL14M"/>
    <property type="match status" value="1"/>
</dbReference>
<dbReference type="Pfam" id="PF00238">
    <property type="entry name" value="Ribosomal_L14"/>
    <property type="match status" value="1"/>
</dbReference>
<dbReference type="SMART" id="SM01374">
    <property type="entry name" value="Ribosomal_L14"/>
    <property type="match status" value="1"/>
</dbReference>
<dbReference type="SUPFAM" id="SSF50193">
    <property type="entry name" value="Ribosomal protein L14"/>
    <property type="match status" value="1"/>
</dbReference>
<dbReference type="PROSITE" id="PS00049">
    <property type="entry name" value="RIBOSOMAL_L14"/>
    <property type="match status" value="1"/>
</dbReference>
<gene>
    <name evidence="1" type="primary">rplN</name>
    <name type="ordered locus">Cpar_0187</name>
</gene>
<keyword id="KW-0687">Ribonucleoprotein</keyword>
<keyword id="KW-0689">Ribosomal protein</keyword>
<keyword id="KW-0694">RNA-binding</keyword>
<keyword id="KW-0699">rRNA-binding</keyword>
<sequence>MIQKETNLVVADNSGAKKVRCIHVFGGTGRRYAALGDQIMVTVKAAVPNGVVKKKDVCKAVVVRCAKEQRRKDGSYIRFDENAVVLLNAQGEPRGTRIFGPVARELRDKRYMKIVSLAPEVL</sequence>
<protein>
    <recommendedName>
        <fullName evidence="1">Large ribosomal subunit protein uL14</fullName>
    </recommendedName>
    <alternativeName>
        <fullName evidence="2">50S ribosomal protein L14</fullName>
    </alternativeName>
</protein>
<evidence type="ECO:0000255" key="1">
    <source>
        <dbReference type="HAMAP-Rule" id="MF_01367"/>
    </source>
</evidence>
<evidence type="ECO:0000305" key="2"/>